<dbReference type="EC" id="3.6.1.45"/>
<dbReference type="EMBL" id="BC122769">
    <property type="protein sequence ID" value="AAI22770.1"/>
    <property type="molecule type" value="mRNA"/>
</dbReference>
<dbReference type="RefSeq" id="NP_001099122.1">
    <property type="nucleotide sequence ID" value="NM_001105652.2"/>
</dbReference>
<dbReference type="SMR" id="Q05B60"/>
<dbReference type="FunCoup" id="Q05B60">
    <property type="interactions" value="1076"/>
</dbReference>
<dbReference type="STRING" id="9913.ENSBTAP00000055697"/>
<dbReference type="PaxDb" id="9913-ENSBTAP00000055697"/>
<dbReference type="Ensembl" id="ENSBTAT00000063951.3">
    <property type="protein sequence ID" value="ENSBTAP00000055697.1"/>
    <property type="gene ID" value="ENSBTAG00000048010.3"/>
</dbReference>
<dbReference type="GeneID" id="100126049"/>
<dbReference type="KEGG" id="bta:100126049"/>
<dbReference type="CTD" id="256281"/>
<dbReference type="VEuPathDB" id="HostDB:ENSBTAG00000048010"/>
<dbReference type="VGNC" id="VGNC:32328">
    <property type="gene designation" value="NUDT14"/>
</dbReference>
<dbReference type="eggNOG" id="KOG4432">
    <property type="taxonomic scope" value="Eukaryota"/>
</dbReference>
<dbReference type="GeneTree" id="ENSGT00940000154045"/>
<dbReference type="HOGENOM" id="CLU_062658_1_0_1"/>
<dbReference type="InParanoid" id="Q05B60"/>
<dbReference type="OMA" id="YTYELCA"/>
<dbReference type="OrthoDB" id="10249920at2759"/>
<dbReference type="TreeFam" id="TF313661"/>
<dbReference type="Reactome" id="R-BTA-480985">
    <property type="pathway name" value="Synthesis of dolichyl-phosphate-glucose"/>
</dbReference>
<dbReference type="Proteomes" id="UP000009136">
    <property type="component" value="Chromosome 21"/>
</dbReference>
<dbReference type="Bgee" id="ENSBTAG00000048010">
    <property type="expression patterns" value="Expressed in olfactory segment of nasal mucosa and 103 other cell types or tissues"/>
</dbReference>
<dbReference type="GO" id="GO:0005737">
    <property type="term" value="C:cytoplasm"/>
    <property type="evidence" value="ECO:0007669"/>
    <property type="project" value="UniProtKB-SubCell"/>
</dbReference>
<dbReference type="GO" id="GO:0047631">
    <property type="term" value="F:ADP-ribose diphosphatase activity"/>
    <property type="evidence" value="ECO:0007669"/>
    <property type="project" value="Ensembl"/>
</dbReference>
<dbReference type="GO" id="GO:0042802">
    <property type="term" value="F:identical protein binding"/>
    <property type="evidence" value="ECO:0007669"/>
    <property type="project" value="Ensembl"/>
</dbReference>
<dbReference type="GO" id="GO:0046872">
    <property type="term" value="F:metal ion binding"/>
    <property type="evidence" value="ECO:0007669"/>
    <property type="project" value="InterPro"/>
</dbReference>
<dbReference type="GO" id="GO:0008768">
    <property type="term" value="F:UDP-sugar diphosphatase activity"/>
    <property type="evidence" value="ECO:0000318"/>
    <property type="project" value="GO_Central"/>
</dbReference>
<dbReference type="GO" id="GO:0006753">
    <property type="term" value="P:nucleoside phosphate metabolic process"/>
    <property type="evidence" value="ECO:0000318"/>
    <property type="project" value="GO_Central"/>
</dbReference>
<dbReference type="GO" id="GO:0019693">
    <property type="term" value="P:ribose phosphate metabolic process"/>
    <property type="evidence" value="ECO:0000318"/>
    <property type="project" value="GO_Central"/>
</dbReference>
<dbReference type="CDD" id="cd18887">
    <property type="entry name" value="NUDIX_UGPPase_Nudt14"/>
    <property type="match status" value="1"/>
</dbReference>
<dbReference type="FunFam" id="3.90.79.10:FF:000035">
    <property type="entry name" value="Uridine diphosphate glucose pyrophosphatase"/>
    <property type="match status" value="1"/>
</dbReference>
<dbReference type="Gene3D" id="3.90.79.10">
    <property type="entry name" value="Nucleoside Triphosphate Pyrophosphohydrolase"/>
    <property type="match status" value="1"/>
</dbReference>
<dbReference type="InterPro" id="IPR004385">
    <property type="entry name" value="NDP_pyrophosphatase"/>
</dbReference>
<dbReference type="InterPro" id="IPR015797">
    <property type="entry name" value="NUDIX_hydrolase-like_dom_sf"/>
</dbReference>
<dbReference type="InterPro" id="IPR000086">
    <property type="entry name" value="NUDIX_hydrolase_dom"/>
</dbReference>
<dbReference type="NCBIfam" id="TIGR00052">
    <property type="entry name" value="nudix-type nucleoside diphosphatase, YffH/AdpP family"/>
    <property type="match status" value="1"/>
</dbReference>
<dbReference type="PANTHER" id="PTHR11839">
    <property type="entry name" value="UDP/ADP-SUGAR PYROPHOSPHATASE"/>
    <property type="match status" value="1"/>
</dbReference>
<dbReference type="PANTHER" id="PTHR11839:SF15">
    <property type="entry name" value="URIDINE DIPHOSPHATE GLUCOSE PYROPHOSPHATASE NUDT14"/>
    <property type="match status" value="1"/>
</dbReference>
<dbReference type="SUPFAM" id="SSF55811">
    <property type="entry name" value="Nudix"/>
    <property type="match status" value="1"/>
</dbReference>
<dbReference type="PROSITE" id="PS51462">
    <property type="entry name" value="NUDIX"/>
    <property type="match status" value="1"/>
</dbReference>
<proteinExistence type="evidence at transcript level"/>
<keyword id="KW-0963">Cytoplasm</keyword>
<keyword id="KW-0378">Hydrolase</keyword>
<keyword id="KW-0460">Magnesium</keyword>
<keyword id="KW-1185">Reference proteome</keyword>
<reference key="1">
    <citation type="submission" date="2006-08" db="EMBL/GenBank/DDBJ databases">
        <authorList>
            <consortium name="NIH - Mammalian Gene Collection (MGC) project"/>
        </authorList>
    </citation>
    <scope>NUCLEOTIDE SEQUENCE [LARGE SCALE MRNA]</scope>
    <source>
        <strain>Hereford</strain>
        <tissue>Hypothalamus</tissue>
    </source>
</reference>
<protein>
    <recommendedName>
        <fullName>Uridine diphosphate glucose pyrophosphatase NUDT14</fullName>
        <shortName>UDPG pyrophosphatase</shortName>
        <shortName>UGPPase</shortName>
        <ecNumber>3.6.1.45</ecNumber>
    </recommendedName>
    <alternativeName>
        <fullName>Nucleoside diphosphate-linked moiety X motif 14</fullName>
        <shortName>Nudix motif 14</shortName>
    </alternativeName>
</protein>
<name>NUD14_BOVIN</name>
<gene>
    <name type="primary">NUDT14</name>
    <name type="synonym">UGPP</name>
</gene>
<comment type="function">
    <text evidence="1">Hydrolyzes UDP-glucose to glucose 1-phosphate and UMP and ADP-ribose to ribose 5-phosphate and AMP. The physiological substrate is probably UDP-glucose. Poor activity on other substrates such as ADP-glucose, CDP-glucose, GDP-glucose and GDP-mannose (By similarity).</text>
</comment>
<comment type="catalytic activity">
    <reaction>
        <text>UDP-sugar + H2O = UMP + alpha-D-aldose 1-phosphate.</text>
        <dbReference type="EC" id="3.6.1.45"/>
    </reaction>
</comment>
<comment type="cofactor">
    <cofactor evidence="1">
        <name>Mg(2+)</name>
        <dbReference type="ChEBI" id="CHEBI:18420"/>
    </cofactor>
</comment>
<comment type="subunit">
    <text evidence="1">Homodimer.</text>
</comment>
<comment type="subcellular location">
    <subcellularLocation>
        <location evidence="1">Cytoplasm</location>
    </subcellularLocation>
</comment>
<comment type="similarity">
    <text evidence="3">Belongs to the Nudix hydrolase family.</text>
</comment>
<accession>Q05B60</accession>
<organism>
    <name type="scientific">Bos taurus</name>
    <name type="common">Bovine</name>
    <dbReference type="NCBI Taxonomy" id="9913"/>
    <lineage>
        <taxon>Eukaryota</taxon>
        <taxon>Metazoa</taxon>
        <taxon>Chordata</taxon>
        <taxon>Craniata</taxon>
        <taxon>Vertebrata</taxon>
        <taxon>Euteleostomi</taxon>
        <taxon>Mammalia</taxon>
        <taxon>Eutheria</taxon>
        <taxon>Laurasiatheria</taxon>
        <taxon>Artiodactyla</taxon>
        <taxon>Ruminantia</taxon>
        <taxon>Pecora</taxon>
        <taxon>Bovidae</taxon>
        <taxon>Bovinae</taxon>
        <taxon>Bos</taxon>
    </lineage>
</organism>
<sequence length="222" mass="23901">MERIEGVAVGRCAASPYLVPLTLHYRQNGAQKSWDFMKTHDSVTILMFNSSRRSLVLVKQFRPAVYAGEVERLFPGSLAAAEQDRPQALQAALPGSAGVTYELCAGLLDQPGLSLEEVACKEAWEECGYRLAPSDLRRVTSYKSGVGLTGSSQTMFYAEVTDAQRGSPGGGLAEEGELIEVVHLPLDGARTFADDPDVPKTLGVIFGISWFFSCVAPGLGLQ</sequence>
<evidence type="ECO:0000250" key="1"/>
<evidence type="ECO:0000255" key="2">
    <source>
        <dbReference type="PROSITE-ProRule" id="PRU00794"/>
    </source>
</evidence>
<evidence type="ECO:0000305" key="3"/>
<feature type="chain" id="PRO_0000282602" description="Uridine diphosphate glucose pyrophosphatase NUDT14">
    <location>
        <begin position="1"/>
        <end position="222"/>
    </location>
</feature>
<feature type="domain" description="Nudix hydrolase" evidence="2">
    <location>
        <begin position="38"/>
        <end position="206"/>
    </location>
</feature>
<feature type="short sequence motif" description="Nudix box">
    <location>
        <begin position="111"/>
        <end position="129"/>
    </location>
</feature>